<reference key="1">
    <citation type="journal article" date="1991" name="J. Bacteriol.">
        <title>Complete nucleotide sequences and comparison of the structural genes of two 2-haloalkanoic acid dehalogenases from Pseudomonas sp. strain CBS3.</title>
        <authorList>
            <person name="Schneider B."/>
            <person name="Mueller R."/>
            <person name="Frank R."/>
            <person name="Lingens F."/>
        </authorList>
    </citation>
    <scope>NUCLEOTIDE SEQUENCE [GENOMIC DNA]</scope>
</reference>
<sequence length="229" mass="25712">MQEIRGVVFDLYGTLCDVHSVAQLCGQYFPERGTEISLMWRQKQLEYSWLRSLMGQYVSFPQATEDALVFVCNALNLKLREDTRIALCNEYLNIKPYREVRSALESLRSGAVPLAILSNGSAHSIQSVVGNAGIEHFFSHLISADEVSVSKPSPAAYELAEKRLKVVRSKLLFVSSNAWDASGARHFGFQVCWVNRSRNTFEQLGERPDHVISGLDELPNLLNFASADR</sequence>
<protein>
    <recommendedName>
        <fullName evidence="3">(S)-2-haloacid dehalogenase 2</fullName>
        <ecNumber evidence="1">3.8.1.2</ecNumber>
    </recommendedName>
    <alternativeName>
        <fullName evidence="2">2-haloalkanoic acid dehalogenase II</fullName>
    </alternativeName>
    <alternativeName>
        <fullName evidence="2">DEHCII</fullName>
    </alternativeName>
    <alternativeName>
        <fullName>Halocarboxylic acid halidohydrolase II</fullName>
    </alternativeName>
    <alternativeName>
        <fullName>L-2-haloacid dehalogenase II</fullName>
    </alternativeName>
</protein>
<dbReference type="EC" id="3.8.1.2" evidence="1"/>
<dbReference type="EMBL" id="M62909">
    <property type="protein sequence ID" value="AAA25833.1"/>
    <property type="molecule type" value="Genomic_DNA"/>
</dbReference>
<dbReference type="PIR" id="B38452">
    <property type="entry name" value="B38452"/>
</dbReference>
<dbReference type="SMR" id="P24070"/>
<dbReference type="GO" id="GO:0018784">
    <property type="term" value="F:(S)-2-haloacid dehalogenase activity"/>
    <property type="evidence" value="ECO:0007669"/>
    <property type="project" value="UniProtKB-EC"/>
</dbReference>
<dbReference type="CDD" id="cd02588">
    <property type="entry name" value="HAD_L2-DEX"/>
    <property type="match status" value="1"/>
</dbReference>
<dbReference type="Gene3D" id="3.40.50.1000">
    <property type="entry name" value="HAD superfamily/HAD-like"/>
    <property type="match status" value="1"/>
</dbReference>
<dbReference type="Gene3D" id="1.10.150.240">
    <property type="entry name" value="Putative phosphatase, domain 2"/>
    <property type="match status" value="1"/>
</dbReference>
<dbReference type="InterPro" id="IPR006328">
    <property type="entry name" value="2-HAD"/>
</dbReference>
<dbReference type="InterPro" id="IPR036412">
    <property type="entry name" value="HAD-like_sf"/>
</dbReference>
<dbReference type="InterPro" id="IPR006439">
    <property type="entry name" value="HAD-SF_hydro_IA"/>
</dbReference>
<dbReference type="InterPro" id="IPR023214">
    <property type="entry name" value="HAD_sf"/>
</dbReference>
<dbReference type="InterPro" id="IPR023198">
    <property type="entry name" value="PGP-like_dom2"/>
</dbReference>
<dbReference type="InterPro" id="IPR051540">
    <property type="entry name" value="S-2-haloacid_dehalogenase"/>
</dbReference>
<dbReference type="NCBIfam" id="TIGR01549">
    <property type="entry name" value="HAD-SF-IA-v1"/>
    <property type="match status" value="1"/>
</dbReference>
<dbReference type="NCBIfam" id="TIGR01493">
    <property type="entry name" value="HAD-SF-IA-v2"/>
    <property type="match status" value="1"/>
</dbReference>
<dbReference type="NCBIfam" id="TIGR01428">
    <property type="entry name" value="HAD_type_II"/>
    <property type="match status" value="1"/>
</dbReference>
<dbReference type="PANTHER" id="PTHR43316:SF3">
    <property type="entry name" value="HALOACID DEHALOGENASE, TYPE II (AFU_ORTHOLOGUE AFUA_2G07750)-RELATED"/>
    <property type="match status" value="1"/>
</dbReference>
<dbReference type="PANTHER" id="PTHR43316">
    <property type="entry name" value="HYDROLASE, HALOACID DELAHOGENASE-RELATED"/>
    <property type="match status" value="1"/>
</dbReference>
<dbReference type="Pfam" id="PF00702">
    <property type="entry name" value="Hydrolase"/>
    <property type="match status" value="1"/>
</dbReference>
<dbReference type="PRINTS" id="PR00413">
    <property type="entry name" value="HADHALOGNASE"/>
</dbReference>
<dbReference type="SFLD" id="SFLDF00045">
    <property type="entry name" value="2-haloacid_dehalogenase"/>
    <property type="match status" value="1"/>
</dbReference>
<dbReference type="SFLD" id="SFLDG01135">
    <property type="entry name" value="C1.5.6:_HAD__Beta-PGM__Phospha"/>
    <property type="match status" value="1"/>
</dbReference>
<dbReference type="SUPFAM" id="SSF56784">
    <property type="entry name" value="HAD-like"/>
    <property type="match status" value="1"/>
</dbReference>
<organism>
    <name type="scientific">Pseudomonas sp. (strain CBS-3)</name>
    <dbReference type="NCBI Taxonomy" id="72586"/>
    <lineage>
        <taxon>Bacteria</taxon>
        <taxon>Pseudomonadati</taxon>
        <taxon>Pseudomonadota</taxon>
    </lineage>
</organism>
<accession>P24070</accession>
<evidence type="ECO:0000250" key="1">
    <source>
        <dbReference type="UniProtKB" id="Q53464"/>
    </source>
</evidence>
<evidence type="ECO:0000303" key="2">
    <source>
    </source>
</evidence>
<evidence type="ECO:0000305" key="3"/>
<feature type="chain" id="PRO_0000079161" description="(S)-2-haloacid dehalogenase 2">
    <location>
        <begin position="1"/>
        <end position="229"/>
    </location>
</feature>
<feature type="region of interest" description="Important for catalytic activity" evidence="1">
    <location>
        <begin position="175"/>
        <end position="180"/>
    </location>
</feature>
<feature type="active site" description="Nucleophile" evidence="1">
    <location>
        <position position="10"/>
    </location>
</feature>
<feature type="binding site" evidence="1">
    <location>
        <begin position="11"/>
        <end position="12"/>
    </location>
    <ligand>
        <name>an (S)-2-haloacid</name>
        <dbReference type="ChEBI" id="CHEBI:137405"/>
    </ligand>
</feature>
<feature type="binding site" evidence="1">
    <location>
        <position position="41"/>
    </location>
    <ligand>
        <name>an (S)-2-haloacid</name>
        <dbReference type="ChEBI" id="CHEBI:137405"/>
    </ligand>
</feature>
<feature type="binding site" evidence="1">
    <location>
        <begin position="118"/>
        <end position="119"/>
    </location>
    <ligand>
        <name>an (S)-2-haloacid</name>
        <dbReference type="ChEBI" id="CHEBI:137405"/>
    </ligand>
</feature>
<feature type="site" description="Important for catalytic activity" evidence="1">
    <location>
        <position position="14"/>
    </location>
</feature>
<feature type="site" description="Important for catalytic activity" evidence="1">
    <location>
        <position position="151"/>
    </location>
</feature>
<feature type="site" description="Important for catalytic activity" evidence="1">
    <location>
        <position position="157"/>
    </location>
</feature>
<name>HAD2_PSEUC</name>
<keyword id="KW-0378">Hydrolase</keyword>
<comment type="function">
    <text evidence="1">Catalyzes the hydrolytic dehalogenation of small (S)-2-haloalkanoic acids to yield the corresponding (R)-2-hydroxyalkanoic acids. Acts on acids of short chain lengths, C(2) to C(4), with inversion of configuration at C-2. Active with 2-halogenated carboxylic acids and converts only the S-isomer (or L-isomer) of 2-chloropropionic acid with inversion of configuration to produce R-lactate (or D-isomer).</text>
</comment>
<comment type="catalytic activity">
    <reaction evidence="1">
        <text>an (S)-2-haloacid + H2O = a (2R)-2-hydroxycarboxylate + a halide anion + H(+)</text>
        <dbReference type="Rhea" id="RHEA:11192"/>
        <dbReference type="ChEBI" id="CHEBI:15377"/>
        <dbReference type="ChEBI" id="CHEBI:15378"/>
        <dbReference type="ChEBI" id="CHEBI:16042"/>
        <dbReference type="ChEBI" id="CHEBI:58314"/>
        <dbReference type="ChEBI" id="CHEBI:137405"/>
        <dbReference type="EC" id="3.8.1.2"/>
    </reaction>
</comment>
<comment type="catalytic activity">
    <reaction evidence="1">
        <text>(S)-2-chloropropanoate + H2O = (R)-lactate + chloride + H(+)</text>
        <dbReference type="Rhea" id="RHEA:67956"/>
        <dbReference type="ChEBI" id="CHEBI:15377"/>
        <dbReference type="ChEBI" id="CHEBI:15378"/>
        <dbReference type="ChEBI" id="CHEBI:16004"/>
        <dbReference type="ChEBI" id="CHEBI:17996"/>
        <dbReference type="ChEBI" id="CHEBI:73934"/>
    </reaction>
</comment>
<comment type="biotechnology">
    <text evidence="3">(S)-2-haloacid dehalogenases may be used for the biodegradation of halogenated substances and their derivatives which are widely used as pesticides, herbicides and other industrial products.</text>
</comment>
<comment type="similarity">
    <text evidence="3">Belongs to the HAD-like hydrolase superfamily. S-2-haloalkanoic acid dehalogenase family.</text>
</comment>
<proteinExistence type="inferred from homology"/>